<feature type="chain" id="PRO_0000273102" description="tRNA(Ile)-lysidine synthase">
    <location>
        <begin position="1"/>
        <end position="430"/>
    </location>
</feature>
<feature type="binding site" evidence="1">
    <location>
        <begin position="27"/>
        <end position="32"/>
    </location>
    <ligand>
        <name>ATP</name>
        <dbReference type="ChEBI" id="CHEBI:30616"/>
    </ligand>
</feature>
<evidence type="ECO:0000255" key="1">
    <source>
        <dbReference type="HAMAP-Rule" id="MF_01161"/>
    </source>
</evidence>
<protein>
    <recommendedName>
        <fullName evidence="1">tRNA(Ile)-lysidine synthase</fullName>
        <ecNumber evidence="1">6.3.4.19</ecNumber>
    </recommendedName>
    <alternativeName>
        <fullName evidence="1">tRNA(Ile)-2-lysyl-cytidine synthase</fullName>
    </alternativeName>
    <alternativeName>
        <fullName evidence="1">tRNA(Ile)-lysidine synthetase</fullName>
    </alternativeName>
</protein>
<proteinExistence type="inferred from homology"/>
<keyword id="KW-0067">ATP-binding</keyword>
<keyword id="KW-0963">Cytoplasm</keyword>
<keyword id="KW-0436">Ligase</keyword>
<keyword id="KW-0547">Nucleotide-binding</keyword>
<keyword id="KW-0819">tRNA processing</keyword>
<name>TILS_RICBR</name>
<accession>Q1RGN9</accession>
<comment type="function">
    <text evidence="1">Ligates lysine onto the cytidine present at position 34 of the AUA codon-specific tRNA(Ile) that contains the anticodon CAU, in an ATP-dependent manner. Cytidine is converted to lysidine, thus changing the amino acid specificity of the tRNA from methionine to isoleucine.</text>
</comment>
<comment type="catalytic activity">
    <reaction evidence="1">
        <text>cytidine(34) in tRNA(Ile2) + L-lysine + ATP = lysidine(34) in tRNA(Ile2) + AMP + diphosphate + H(+)</text>
        <dbReference type="Rhea" id="RHEA:43744"/>
        <dbReference type="Rhea" id="RHEA-COMP:10625"/>
        <dbReference type="Rhea" id="RHEA-COMP:10670"/>
        <dbReference type="ChEBI" id="CHEBI:15378"/>
        <dbReference type="ChEBI" id="CHEBI:30616"/>
        <dbReference type="ChEBI" id="CHEBI:32551"/>
        <dbReference type="ChEBI" id="CHEBI:33019"/>
        <dbReference type="ChEBI" id="CHEBI:82748"/>
        <dbReference type="ChEBI" id="CHEBI:83665"/>
        <dbReference type="ChEBI" id="CHEBI:456215"/>
        <dbReference type="EC" id="6.3.4.19"/>
    </reaction>
</comment>
<comment type="subcellular location">
    <subcellularLocation>
        <location evidence="1">Cytoplasm</location>
    </subcellularLocation>
</comment>
<comment type="domain">
    <text>The N-terminal region contains the highly conserved SGGXDS motif, predicted to be a P-loop motif involved in ATP binding.</text>
</comment>
<comment type="similarity">
    <text evidence="1">Belongs to the tRNA(Ile)-lysidine synthase family.</text>
</comment>
<gene>
    <name evidence="1" type="primary">tilS</name>
    <name type="ordered locus">RBE_1394</name>
</gene>
<sequence>MLYEKFEHNINNLIGGFGLSKIAIAVSGGSDSVALLYLANIWAKKNNIELFVLSVDHNLRDQSKQEIEYIQNTANDLGLKFYSLFFDHQNNFSNLQERARKGRYDLMTSLCQKLDILVLLTAHHEDDYIENFCLRLERKSGVFGLSSSSVNWHNNTQIIRPLFNIPKSELVNYLATNNIKWFEDQSNLSTKYRRNTIRQKLAKEEVYIKDDIITQQIKVNELIENKFKPELISAIAESVKISEYGFAFLDLIKFSGFSQEVRVQLINFLLIIISGQQRSARFYSVEPILKLIRQSLDFKNTLHGCVIKRMQNKLLIYREFGKKLPESKLLLDKQLVWDNRFRITKNHNIENCVATYLSLEDYKIIKEKLDLEVLKNLSCGNHNAILFTLPIVKILEKVVAIPHISYYDNDIKSFNVSFAPDFTSRFTHFY</sequence>
<reference key="1">
    <citation type="journal article" date="2006" name="PLoS Genet.">
        <title>Genome sequence of Rickettsia bellii illuminates the role of amoebae in gene exchanges between intracellular pathogens.</title>
        <authorList>
            <person name="Ogata H."/>
            <person name="La Scola B."/>
            <person name="Audic S."/>
            <person name="Renesto P."/>
            <person name="Blanc G."/>
            <person name="Robert C."/>
            <person name="Fournier P.-E."/>
            <person name="Claverie J.-M."/>
            <person name="Raoult D."/>
        </authorList>
    </citation>
    <scope>NUCLEOTIDE SEQUENCE [LARGE SCALE GENOMIC DNA]</scope>
    <source>
        <strain>RML369-C</strain>
    </source>
</reference>
<dbReference type="EC" id="6.3.4.19" evidence="1"/>
<dbReference type="EMBL" id="CP000087">
    <property type="protein sequence ID" value="ABE05475.1"/>
    <property type="molecule type" value="Genomic_DNA"/>
</dbReference>
<dbReference type="RefSeq" id="WP_011478044.1">
    <property type="nucleotide sequence ID" value="NC_007940.1"/>
</dbReference>
<dbReference type="SMR" id="Q1RGN9"/>
<dbReference type="KEGG" id="rbe:RBE_1394"/>
<dbReference type="eggNOG" id="COG0037">
    <property type="taxonomic scope" value="Bacteria"/>
</dbReference>
<dbReference type="HOGENOM" id="CLU_018869_3_2_5"/>
<dbReference type="OrthoDB" id="9807403at2"/>
<dbReference type="Proteomes" id="UP000001951">
    <property type="component" value="Chromosome"/>
</dbReference>
<dbReference type="GO" id="GO:0005737">
    <property type="term" value="C:cytoplasm"/>
    <property type="evidence" value="ECO:0007669"/>
    <property type="project" value="UniProtKB-SubCell"/>
</dbReference>
<dbReference type="GO" id="GO:0005524">
    <property type="term" value="F:ATP binding"/>
    <property type="evidence" value="ECO:0007669"/>
    <property type="project" value="UniProtKB-UniRule"/>
</dbReference>
<dbReference type="GO" id="GO:0032267">
    <property type="term" value="F:tRNA(Ile)-lysidine synthase activity"/>
    <property type="evidence" value="ECO:0007669"/>
    <property type="project" value="UniProtKB-EC"/>
</dbReference>
<dbReference type="GO" id="GO:0006400">
    <property type="term" value="P:tRNA modification"/>
    <property type="evidence" value="ECO:0007669"/>
    <property type="project" value="UniProtKB-UniRule"/>
</dbReference>
<dbReference type="CDD" id="cd01992">
    <property type="entry name" value="TilS_N"/>
    <property type="match status" value="1"/>
</dbReference>
<dbReference type="Gene3D" id="3.40.50.620">
    <property type="entry name" value="HUPs"/>
    <property type="match status" value="1"/>
</dbReference>
<dbReference type="HAMAP" id="MF_01161">
    <property type="entry name" value="tRNA_Ile_lys_synt"/>
    <property type="match status" value="1"/>
</dbReference>
<dbReference type="InterPro" id="IPR014729">
    <property type="entry name" value="Rossmann-like_a/b/a_fold"/>
</dbReference>
<dbReference type="InterPro" id="IPR011063">
    <property type="entry name" value="TilS/TtcA_N"/>
</dbReference>
<dbReference type="InterPro" id="IPR012094">
    <property type="entry name" value="tRNA_Ile_lys_synt"/>
</dbReference>
<dbReference type="InterPro" id="IPR012795">
    <property type="entry name" value="tRNA_Ile_lys_synt_N"/>
</dbReference>
<dbReference type="NCBIfam" id="TIGR02432">
    <property type="entry name" value="lysidine_TilS_N"/>
    <property type="match status" value="1"/>
</dbReference>
<dbReference type="PANTHER" id="PTHR43033">
    <property type="entry name" value="TRNA(ILE)-LYSIDINE SYNTHASE-RELATED"/>
    <property type="match status" value="1"/>
</dbReference>
<dbReference type="PANTHER" id="PTHR43033:SF1">
    <property type="entry name" value="TRNA(ILE)-LYSIDINE SYNTHASE-RELATED"/>
    <property type="match status" value="1"/>
</dbReference>
<dbReference type="Pfam" id="PF01171">
    <property type="entry name" value="ATP_bind_3"/>
    <property type="match status" value="1"/>
</dbReference>
<dbReference type="SUPFAM" id="SSF52402">
    <property type="entry name" value="Adenine nucleotide alpha hydrolases-like"/>
    <property type="match status" value="1"/>
</dbReference>
<organism>
    <name type="scientific">Rickettsia bellii (strain RML369-C)</name>
    <dbReference type="NCBI Taxonomy" id="336407"/>
    <lineage>
        <taxon>Bacteria</taxon>
        <taxon>Pseudomonadati</taxon>
        <taxon>Pseudomonadota</taxon>
        <taxon>Alphaproteobacteria</taxon>
        <taxon>Rickettsiales</taxon>
        <taxon>Rickettsiaceae</taxon>
        <taxon>Rickettsieae</taxon>
        <taxon>Rickettsia</taxon>
        <taxon>belli group</taxon>
    </lineage>
</organism>